<organism>
    <name type="scientific">Halobacterium salinarum (strain ATCC 29341 / DSM 671 / R1)</name>
    <dbReference type="NCBI Taxonomy" id="478009"/>
    <lineage>
        <taxon>Archaea</taxon>
        <taxon>Methanobacteriati</taxon>
        <taxon>Methanobacteriota</taxon>
        <taxon>Stenosarchaea group</taxon>
        <taxon>Halobacteria</taxon>
        <taxon>Halobacteriales</taxon>
        <taxon>Halobacteriaceae</taxon>
        <taxon>Halobacterium</taxon>
        <taxon>Halobacterium salinarum NRC-34001</taxon>
    </lineage>
</organism>
<sequence length="91" mass="10129">MTDAVDAEEIRHVADLARLRLDDEDVDTVVDHCGDILEHFERLEEVPEVDAEPELVNVMRADEIADSLDQDDALANAPETEDGRFKGPNVS</sequence>
<dbReference type="EC" id="6.3.5.-" evidence="1"/>
<dbReference type="EMBL" id="AM774415">
    <property type="protein sequence ID" value="CAP13585.1"/>
    <property type="molecule type" value="Genomic_DNA"/>
</dbReference>
<dbReference type="RefSeq" id="WP_012289242.1">
    <property type="nucleotide sequence ID" value="NC_010364.1"/>
</dbReference>
<dbReference type="SMR" id="B0R4C0"/>
<dbReference type="EnsemblBacteria" id="CAP13585">
    <property type="protein sequence ID" value="CAP13585"/>
    <property type="gene ID" value="OE_2283F"/>
</dbReference>
<dbReference type="GeneID" id="89349286"/>
<dbReference type="KEGG" id="hsl:OE_2283F"/>
<dbReference type="HOGENOM" id="CLU_105899_1_1_2"/>
<dbReference type="PhylomeDB" id="B0R4C0"/>
<dbReference type="Proteomes" id="UP000001321">
    <property type="component" value="Chromosome"/>
</dbReference>
<dbReference type="GO" id="GO:0050566">
    <property type="term" value="F:asparaginyl-tRNA synthase (glutamine-hydrolyzing) activity"/>
    <property type="evidence" value="ECO:0007669"/>
    <property type="project" value="RHEA"/>
</dbReference>
<dbReference type="GO" id="GO:0005524">
    <property type="term" value="F:ATP binding"/>
    <property type="evidence" value="ECO:0007669"/>
    <property type="project" value="UniProtKB-KW"/>
</dbReference>
<dbReference type="GO" id="GO:0050567">
    <property type="term" value="F:glutaminyl-tRNA synthase (glutamine-hydrolyzing) activity"/>
    <property type="evidence" value="ECO:0007669"/>
    <property type="project" value="UniProtKB-UniRule"/>
</dbReference>
<dbReference type="GO" id="GO:0070681">
    <property type="term" value="P:glutaminyl-tRNAGln biosynthesis via transamidation"/>
    <property type="evidence" value="ECO:0007669"/>
    <property type="project" value="TreeGrafter"/>
</dbReference>
<dbReference type="GO" id="GO:0006450">
    <property type="term" value="P:regulation of translational fidelity"/>
    <property type="evidence" value="ECO:0007669"/>
    <property type="project" value="InterPro"/>
</dbReference>
<dbReference type="GO" id="GO:0006412">
    <property type="term" value="P:translation"/>
    <property type="evidence" value="ECO:0007669"/>
    <property type="project" value="UniProtKB-UniRule"/>
</dbReference>
<dbReference type="Gene3D" id="1.10.20.60">
    <property type="entry name" value="Glu-tRNAGln amidotransferase C subunit, N-terminal domain"/>
    <property type="match status" value="1"/>
</dbReference>
<dbReference type="HAMAP" id="MF_00122">
    <property type="entry name" value="GatC"/>
    <property type="match status" value="1"/>
</dbReference>
<dbReference type="InterPro" id="IPR036113">
    <property type="entry name" value="Asp/Glu-ADT_sf_sub_c"/>
</dbReference>
<dbReference type="InterPro" id="IPR003837">
    <property type="entry name" value="GatC"/>
</dbReference>
<dbReference type="NCBIfam" id="TIGR00135">
    <property type="entry name" value="gatC"/>
    <property type="match status" value="1"/>
</dbReference>
<dbReference type="PANTHER" id="PTHR15004">
    <property type="entry name" value="GLUTAMYL-TRNA(GLN) AMIDOTRANSFERASE SUBUNIT C, MITOCHONDRIAL"/>
    <property type="match status" value="1"/>
</dbReference>
<dbReference type="PANTHER" id="PTHR15004:SF0">
    <property type="entry name" value="GLUTAMYL-TRNA(GLN) AMIDOTRANSFERASE SUBUNIT C, MITOCHONDRIAL"/>
    <property type="match status" value="1"/>
</dbReference>
<dbReference type="Pfam" id="PF02686">
    <property type="entry name" value="GatC"/>
    <property type="match status" value="1"/>
</dbReference>
<dbReference type="SUPFAM" id="SSF141000">
    <property type="entry name" value="Glu-tRNAGln amidotransferase C subunit"/>
    <property type="match status" value="1"/>
</dbReference>
<reference key="1">
    <citation type="journal article" date="2008" name="Genomics">
        <title>Evolution in the laboratory: the genome of Halobacterium salinarum strain R1 compared to that of strain NRC-1.</title>
        <authorList>
            <person name="Pfeiffer F."/>
            <person name="Schuster S.C."/>
            <person name="Broicher A."/>
            <person name="Falb M."/>
            <person name="Palm P."/>
            <person name="Rodewald K."/>
            <person name="Ruepp A."/>
            <person name="Soppa J."/>
            <person name="Tittor J."/>
            <person name="Oesterhelt D."/>
        </authorList>
    </citation>
    <scope>NUCLEOTIDE SEQUENCE [LARGE SCALE GENOMIC DNA]</scope>
    <source>
        <strain>ATCC 29341 / DSM 671 / R1</strain>
    </source>
</reference>
<comment type="function">
    <text evidence="1">Allows the formation of correctly charged Asn-tRNA(Asn) or Gln-tRNA(Gln) through the transamidation of misacylated Asp-tRNA(Asn) or Glu-tRNA(Gln) in organisms which lack either or both of asparaginyl-tRNA or glutaminyl-tRNA synthetases. The reaction takes place in the presence of glutamine and ATP through an activated phospho-Asp-tRNA(Asn) or phospho-Glu-tRNA(Gln).</text>
</comment>
<comment type="catalytic activity">
    <reaction evidence="1">
        <text>L-glutamyl-tRNA(Gln) + L-glutamine + ATP + H2O = L-glutaminyl-tRNA(Gln) + L-glutamate + ADP + phosphate + H(+)</text>
        <dbReference type="Rhea" id="RHEA:17521"/>
        <dbReference type="Rhea" id="RHEA-COMP:9681"/>
        <dbReference type="Rhea" id="RHEA-COMP:9684"/>
        <dbReference type="ChEBI" id="CHEBI:15377"/>
        <dbReference type="ChEBI" id="CHEBI:15378"/>
        <dbReference type="ChEBI" id="CHEBI:29985"/>
        <dbReference type="ChEBI" id="CHEBI:30616"/>
        <dbReference type="ChEBI" id="CHEBI:43474"/>
        <dbReference type="ChEBI" id="CHEBI:58359"/>
        <dbReference type="ChEBI" id="CHEBI:78520"/>
        <dbReference type="ChEBI" id="CHEBI:78521"/>
        <dbReference type="ChEBI" id="CHEBI:456216"/>
    </reaction>
</comment>
<comment type="catalytic activity">
    <reaction evidence="1">
        <text>L-aspartyl-tRNA(Asn) + L-glutamine + ATP + H2O = L-asparaginyl-tRNA(Asn) + L-glutamate + ADP + phosphate + 2 H(+)</text>
        <dbReference type="Rhea" id="RHEA:14513"/>
        <dbReference type="Rhea" id="RHEA-COMP:9674"/>
        <dbReference type="Rhea" id="RHEA-COMP:9677"/>
        <dbReference type="ChEBI" id="CHEBI:15377"/>
        <dbReference type="ChEBI" id="CHEBI:15378"/>
        <dbReference type="ChEBI" id="CHEBI:29985"/>
        <dbReference type="ChEBI" id="CHEBI:30616"/>
        <dbReference type="ChEBI" id="CHEBI:43474"/>
        <dbReference type="ChEBI" id="CHEBI:58359"/>
        <dbReference type="ChEBI" id="CHEBI:78515"/>
        <dbReference type="ChEBI" id="CHEBI:78516"/>
        <dbReference type="ChEBI" id="CHEBI:456216"/>
    </reaction>
</comment>
<comment type="subunit">
    <text evidence="1">Heterotrimer of A, B and C subunits.</text>
</comment>
<comment type="similarity">
    <text evidence="1">Belongs to the GatC family.</text>
</comment>
<accession>B0R4C0</accession>
<proteinExistence type="inferred from homology"/>
<evidence type="ECO:0000255" key="1">
    <source>
        <dbReference type="HAMAP-Rule" id="MF_00122"/>
    </source>
</evidence>
<evidence type="ECO:0000256" key="2">
    <source>
        <dbReference type="SAM" id="MobiDB-lite"/>
    </source>
</evidence>
<keyword id="KW-0067">ATP-binding</keyword>
<keyword id="KW-0436">Ligase</keyword>
<keyword id="KW-0547">Nucleotide-binding</keyword>
<keyword id="KW-0648">Protein biosynthesis</keyword>
<gene>
    <name evidence="1" type="primary">gatC</name>
    <name type="ordered locus">OE_2283F</name>
</gene>
<protein>
    <recommendedName>
        <fullName evidence="1">Aspartyl/glutamyl-tRNA(Asn/Gln) amidotransferase subunit C</fullName>
        <shortName evidence="1">Asp/Glu-ADT subunit C</shortName>
        <ecNumber evidence="1">6.3.5.-</ecNumber>
    </recommendedName>
</protein>
<name>GATC_HALS3</name>
<feature type="chain" id="PRO_1000095286" description="Aspartyl/glutamyl-tRNA(Asn/Gln) amidotransferase subunit C">
    <location>
        <begin position="1"/>
        <end position="91"/>
    </location>
</feature>
<feature type="region of interest" description="Disordered" evidence="2">
    <location>
        <begin position="68"/>
        <end position="91"/>
    </location>
</feature>